<dbReference type="EMBL" id="AM498294">
    <property type="protein sequence ID" value="CAM57282.1"/>
    <property type="molecule type" value="Genomic_DNA"/>
</dbReference>
<dbReference type="SMR" id="B1VB61"/>
<dbReference type="GO" id="GO:0005886">
    <property type="term" value="C:plasma membrane"/>
    <property type="evidence" value="ECO:0007669"/>
    <property type="project" value="UniProtKB-SubCell"/>
</dbReference>
<dbReference type="GO" id="GO:0015254">
    <property type="term" value="F:glycerol channel activity"/>
    <property type="evidence" value="ECO:0007669"/>
    <property type="project" value="TreeGrafter"/>
</dbReference>
<dbReference type="CDD" id="cd00333">
    <property type="entry name" value="MIP"/>
    <property type="match status" value="1"/>
</dbReference>
<dbReference type="Gene3D" id="1.20.1080.10">
    <property type="entry name" value="Glycerol uptake facilitator protein"/>
    <property type="match status" value="1"/>
</dbReference>
<dbReference type="InterPro" id="IPR023271">
    <property type="entry name" value="Aquaporin-like"/>
</dbReference>
<dbReference type="InterPro" id="IPR000425">
    <property type="entry name" value="MIP"/>
</dbReference>
<dbReference type="InterPro" id="IPR050363">
    <property type="entry name" value="MIP/Aquaporin"/>
</dbReference>
<dbReference type="InterPro" id="IPR022357">
    <property type="entry name" value="MIP_CS"/>
</dbReference>
<dbReference type="NCBIfam" id="TIGR00861">
    <property type="entry name" value="MIP"/>
    <property type="match status" value="1"/>
</dbReference>
<dbReference type="PANTHER" id="PTHR43829">
    <property type="entry name" value="AQUAPORIN OR AQUAGLYCEROPORIN RELATED"/>
    <property type="match status" value="1"/>
</dbReference>
<dbReference type="PANTHER" id="PTHR43829:SF9">
    <property type="entry name" value="AQUAPORIN-9"/>
    <property type="match status" value="1"/>
</dbReference>
<dbReference type="Pfam" id="PF00230">
    <property type="entry name" value="MIP"/>
    <property type="match status" value="1"/>
</dbReference>
<dbReference type="PRINTS" id="PR00783">
    <property type="entry name" value="MINTRINSICP"/>
</dbReference>
<dbReference type="SUPFAM" id="SSF81338">
    <property type="entry name" value="Aquaporin-like"/>
    <property type="match status" value="1"/>
</dbReference>
<dbReference type="PROSITE" id="PS00221">
    <property type="entry name" value="MIP"/>
    <property type="match status" value="1"/>
</dbReference>
<proteinExistence type="inferred from homology"/>
<reference key="1">
    <citation type="journal article" date="2008" name="J. Biol. Chem.">
        <title>Biochemical and Structural Insights into Bacterial Organelle Form and Biogenesis.</title>
        <authorList>
            <person name="Parsons J.B."/>
            <person name="Dinesh S.D."/>
            <person name="Deery E."/>
            <person name="Leech H.K."/>
            <person name="Brindley A.A."/>
            <person name="Heldt D."/>
            <person name="Frank S."/>
            <person name="Smales C.M."/>
            <person name="Lunsdorf H."/>
            <person name="Rambach A."/>
            <person name="Gass M.H."/>
            <person name="Bleloch A."/>
            <person name="McClean K.J."/>
            <person name="Munro A.W."/>
            <person name="Rigby S.E.J."/>
            <person name="Warren M.J."/>
            <person name="Prentice M.B."/>
        </authorList>
    </citation>
    <scope>NUCLEOTIDE SEQUENCE [GENOMIC DNA]</scope>
    <scope>POSSIBLE FUNCTION</scope>
    <scope>MOTIF</scope>
    <scope>DISRUPTION PHENOTYPE</scope>
</reference>
<accession>B1VB61</accession>
<name>PDUF_CITFR</name>
<protein>
    <recommendedName>
        <fullName evidence="3">Propanediol uptake facilitator PduF</fullName>
    </recommendedName>
</protein>
<sequence>MNDSLKAQCIAEFLGTGLFLFFGIGCLSALKVAGASLGLWEICIIWGLGISLAVYLTAGISGAHLNPAITIALWLFACFPGRKVLPYTVAQVAGAFGGALLAYLLYGSLFTEYESAHQMVRGSLESLHLASIFSTYPAAALSVWQAALVEVVITSILMGMIMALTDDGNGVPKGPLAPLLIGILVAVIGASTGPLTGFAMNPARDFGPKLFAWMAGWGDVAMTGGRDIPYFIVPIVAPIIGACAGAAIYRYLIGKNLPCNTCKLDENES</sequence>
<gene>
    <name evidence="3" type="primary">pduF</name>
</gene>
<organism>
    <name type="scientific">Citrobacter freundii</name>
    <dbReference type="NCBI Taxonomy" id="546"/>
    <lineage>
        <taxon>Bacteria</taxon>
        <taxon>Pseudomonadati</taxon>
        <taxon>Pseudomonadota</taxon>
        <taxon>Gammaproteobacteria</taxon>
        <taxon>Enterobacterales</taxon>
        <taxon>Enterobacteriaceae</taxon>
        <taxon>Citrobacter</taxon>
        <taxon>Citrobacter freundii complex</taxon>
    </lineage>
</organism>
<feature type="chain" id="PRO_0000454257" description="Propanediol uptake facilitator PduF">
    <location>
        <begin position="1"/>
        <end position="269"/>
    </location>
</feature>
<feature type="transmembrane region" description="Helical" evidence="1">
    <location>
        <begin position="10"/>
        <end position="30"/>
    </location>
</feature>
<feature type="transmembrane region" description="Helical" evidence="1">
    <location>
        <begin position="42"/>
        <end position="62"/>
    </location>
</feature>
<feature type="transmembrane region" description="Helical" evidence="1">
    <location>
        <begin position="69"/>
        <end position="89"/>
    </location>
</feature>
<feature type="transmembrane region" description="Helical" evidence="1">
    <location>
        <begin position="143"/>
        <end position="163"/>
    </location>
</feature>
<feature type="transmembrane region" description="Helical" evidence="1">
    <location>
        <begin position="179"/>
        <end position="199"/>
    </location>
</feature>
<feature type="transmembrane region" description="Helical" evidence="1">
    <location>
        <begin position="228"/>
        <end position="248"/>
    </location>
</feature>
<feature type="short sequence motif" description="NPA 1" evidence="2">
    <location>
        <begin position="66"/>
        <end position="68"/>
    </location>
</feature>
<feature type="short sequence motif" description="NPA 2" evidence="2">
    <location>
        <begin position="201"/>
        <end position="203"/>
    </location>
</feature>
<evidence type="ECO:0000255" key="1"/>
<evidence type="ECO:0000269" key="2">
    <source>
    </source>
</evidence>
<evidence type="ECO:0000303" key="3">
    <source>
    </source>
</evidence>
<evidence type="ECO:0000305" key="4"/>
<evidence type="ECO:0000305" key="5">
    <source>
    </source>
</evidence>
<comment type="function">
    <text evidence="5">Probably facilitates diffusion of 1,2-propanediol (1,2-PD) into the cell.</text>
</comment>
<comment type="subcellular location">
    <subcellularLocation>
        <location evidence="4">Cell inner membrane</location>
        <topology evidence="1">Multi-pass membrane protein</topology>
    </subcellularLocation>
</comment>
<comment type="domain">
    <text evidence="4">Aquaporins contain two tandem repeats each containing three membrane-spanning domains and a pore-forming loop with the signature motif Asn-Pro-Ala (NPA).</text>
</comment>
<comment type="disruption phenotype">
    <text evidence="2">Not required for bacterial microcompartment (BMC) formation upon expression of the 21-gene pdu operon in E.coli (this gene is upstream and on the other strand from the pdu operon).</text>
</comment>
<comment type="similarity">
    <text evidence="4">Belongs to the MIP/aquaporin (TC 1.A.8) family.</text>
</comment>
<keyword id="KW-0997">Cell inner membrane</keyword>
<keyword id="KW-1003">Cell membrane</keyword>
<keyword id="KW-0472">Membrane</keyword>
<keyword id="KW-0677">Repeat</keyword>
<keyword id="KW-0812">Transmembrane</keyword>
<keyword id="KW-1133">Transmembrane helix</keyword>
<keyword id="KW-0813">Transport</keyword>